<gene>
    <name evidence="1" type="primary">rplY</name>
    <name evidence="1" type="synonym">ctc</name>
    <name type="ordered locus">TWT_654</name>
</gene>
<keyword id="KW-1185">Reference proteome</keyword>
<keyword id="KW-0687">Ribonucleoprotein</keyword>
<keyword id="KW-0689">Ribosomal protein</keyword>
<keyword id="KW-0694">RNA-binding</keyword>
<keyword id="KW-0699">rRNA-binding</keyword>
<protein>
    <recommendedName>
        <fullName evidence="1">Large ribosomal subunit protein bL25</fullName>
    </recommendedName>
    <alternativeName>
        <fullName evidence="2">50S ribosomal protein L25</fullName>
    </alternativeName>
    <alternativeName>
        <fullName evidence="1">General stress protein CTC</fullName>
    </alternativeName>
</protein>
<sequence>MVYPVVEAESRVGFGKGFARRARAAGKIPAVAYGLKRAPEHVLLPAAQMSLIMRRANALLQLKIDARESLVLIKQVQRDRIRNIIEHLDMLFVNEDDAVTIRVPLRFVGQSYAGTVTSVENYSVAVTLQVSQIPEALVVDVSGLQAGRRIFASDIALPDGALLVSPPRLLIAKVDPVRRATQESPPD</sequence>
<comment type="function">
    <text evidence="1">This is one of the proteins that binds to the 5S RNA in the ribosome where it forms part of the central protuberance.</text>
</comment>
<comment type="subunit">
    <text evidence="1">Part of the 50S ribosomal subunit; part of the 5S rRNA/L5/L18/L25 subcomplex. Contacts the 5S rRNA. Binds to the 5S rRNA independently of L5 and L18.</text>
</comment>
<comment type="similarity">
    <text evidence="1">Belongs to the bacterial ribosomal protein bL25 family. CTC subfamily.</text>
</comment>
<comment type="sequence caution" evidence="2">
    <conflict type="erroneous initiation">
        <sequence resource="EMBL-CDS" id="AAO44751"/>
    </conflict>
</comment>
<feature type="chain" id="PRO_0000181614" description="Large ribosomal subunit protein bL25">
    <location>
        <begin position="1"/>
        <end position="187"/>
    </location>
</feature>
<evidence type="ECO:0000255" key="1">
    <source>
        <dbReference type="HAMAP-Rule" id="MF_01334"/>
    </source>
</evidence>
<evidence type="ECO:0000305" key="2"/>
<accession>Q83FQ8</accession>
<organism>
    <name type="scientific">Tropheryma whipplei (strain Twist)</name>
    <name type="common">Whipple's bacillus</name>
    <dbReference type="NCBI Taxonomy" id="203267"/>
    <lineage>
        <taxon>Bacteria</taxon>
        <taxon>Bacillati</taxon>
        <taxon>Actinomycetota</taxon>
        <taxon>Actinomycetes</taxon>
        <taxon>Micrococcales</taxon>
        <taxon>Tropherymataceae</taxon>
        <taxon>Tropheryma</taxon>
    </lineage>
</organism>
<proteinExistence type="inferred from homology"/>
<name>RL25_TROWT</name>
<dbReference type="EMBL" id="AE014184">
    <property type="protein sequence ID" value="AAO44751.1"/>
    <property type="status" value="ALT_INIT"/>
    <property type="molecule type" value="Genomic_DNA"/>
</dbReference>
<dbReference type="SMR" id="Q83FQ8"/>
<dbReference type="STRING" id="203267.TWT_654"/>
<dbReference type="KEGG" id="twh:TWT_654"/>
<dbReference type="eggNOG" id="COG1825">
    <property type="taxonomic scope" value="Bacteria"/>
</dbReference>
<dbReference type="HOGENOM" id="CLU_075939_1_0_11"/>
<dbReference type="OrthoDB" id="5242980at2"/>
<dbReference type="Proteomes" id="UP000002200">
    <property type="component" value="Chromosome"/>
</dbReference>
<dbReference type="GO" id="GO:0022625">
    <property type="term" value="C:cytosolic large ribosomal subunit"/>
    <property type="evidence" value="ECO:0007669"/>
    <property type="project" value="TreeGrafter"/>
</dbReference>
<dbReference type="GO" id="GO:0008097">
    <property type="term" value="F:5S rRNA binding"/>
    <property type="evidence" value="ECO:0007669"/>
    <property type="project" value="InterPro"/>
</dbReference>
<dbReference type="GO" id="GO:0003735">
    <property type="term" value="F:structural constituent of ribosome"/>
    <property type="evidence" value="ECO:0007669"/>
    <property type="project" value="InterPro"/>
</dbReference>
<dbReference type="GO" id="GO:0006412">
    <property type="term" value="P:translation"/>
    <property type="evidence" value="ECO:0007669"/>
    <property type="project" value="UniProtKB-UniRule"/>
</dbReference>
<dbReference type="CDD" id="cd00495">
    <property type="entry name" value="Ribosomal_L25_TL5_CTC"/>
    <property type="match status" value="1"/>
</dbReference>
<dbReference type="Gene3D" id="2.170.120.20">
    <property type="entry name" value="Ribosomal protein L25, beta domain"/>
    <property type="match status" value="1"/>
</dbReference>
<dbReference type="Gene3D" id="2.40.240.10">
    <property type="entry name" value="Ribosomal Protein L25, Chain P"/>
    <property type="match status" value="1"/>
</dbReference>
<dbReference type="HAMAP" id="MF_01334">
    <property type="entry name" value="Ribosomal_bL25_CTC"/>
    <property type="match status" value="1"/>
</dbReference>
<dbReference type="InterPro" id="IPR020056">
    <property type="entry name" value="Rbsml_bL25/Gln-tRNA_synth_N"/>
</dbReference>
<dbReference type="InterPro" id="IPR011035">
    <property type="entry name" value="Ribosomal_bL25/Gln-tRNA_synth"/>
</dbReference>
<dbReference type="InterPro" id="IPR020057">
    <property type="entry name" value="Ribosomal_bL25_b-dom"/>
</dbReference>
<dbReference type="InterPro" id="IPR037121">
    <property type="entry name" value="Ribosomal_bL25_C"/>
</dbReference>
<dbReference type="InterPro" id="IPR001021">
    <property type="entry name" value="Ribosomal_bL25_long"/>
</dbReference>
<dbReference type="InterPro" id="IPR029751">
    <property type="entry name" value="Ribosomal_L25_dom"/>
</dbReference>
<dbReference type="InterPro" id="IPR020930">
    <property type="entry name" value="Ribosomal_uL5_bac-type"/>
</dbReference>
<dbReference type="NCBIfam" id="TIGR00731">
    <property type="entry name" value="bL25_bact_ctc"/>
    <property type="match status" value="1"/>
</dbReference>
<dbReference type="NCBIfam" id="NF004131">
    <property type="entry name" value="PRK05618.2-1"/>
    <property type="match status" value="1"/>
</dbReference>
<dbReference type="PANTHER" id="PTHR33284">
    <property type="entry name" value="RIBOSOMAL PROTEIN L25/GLN-TRNA SYNTHETASE, ANTI-CODON-BINDING DOMAIN-CONTAINING PROTEIN"/>
    <property type="match status" value="1"/>
</dbReference>
<dbReference type="PANTHER" id="PTHR33284:SF1">
    <property type="entry name" value="RIBOSOMAL PROTEIN L25_GLN-TRNA SYNTHETASE, ANTI-CODON-BINDING DOMAIN-CONTAINING PROTEIN"/>
    <property type="match status" value="1"/>
</dbReference>
<dbReference type="Pfam" id="PF01386">
    <property type="entry name" value="Ribosomal_L25p"/>
    <property type="match status" value="1"/>
</dbReference>
<dbReference type="Pfam" id="PF14693">
    <property type="entry name" value="Ribosomal_TL5_C"/>
    <property type="match status" value="1"/>
</dbReference>
<dbReference type="SUPFAM" id="SSF50715">
    <property type="entry name" value="Ribosomal protein L25-like"/>
    <property type="match status" value="1"/>
</dbReference>
<reference key="1">
    <citation type="journal article" date="2003" name="Genome Res.">
        <title>Tropheryma whipplei twist: a human pathogenic Actinobacteria with a reduced genome.</title>
        <authorList>
            <person name="Raoult D."/>
            <person name="Ogata H."/>
            <person name="Audic S."/>
            <person name="Robert C."/>
            <person name="Suhre K."/>
            <person name="Drancourt M."/>
            <person name="Claverie J.-M."/>
        </authorList>
    </citation>
    <scope>NUCLEOTIDE SEQUENCE [LARGE SCALE GENOMIC DNA]</scope>
    <source>
        <strain>Twist</strain>
    </source>
</reference>